<sequence length="38" mass="4586">MKIYSSIKKRCEHCRIIKRKGKRFVICKVNPSHKQRQG</sequence>
<organism>
    <name type="scientific">Chlorobium phaeobacteroides (strain DSM 266 / SMG 266 / 2430)</name>
    <dbReference type="NCBI Taxonomy" id="290317"/>
    <lineage>
        <taxon>Bacteria</taxon>
        <taxon>Pseudomonadati</taxon>
        <taxon>Chlorobiota</taxon>
        <taxon>Chlorobiia</taxon>
        <taxon>Chlorobiales</taxon>
        <taxon>Chlorobiaceae</taxon>
        <taxon>Chlorobium/Pelodictyon group</taxon>
        <taxon>Chlorobium</taxon>
    </lineage>
</organism>
<name>RL36_CHLPD</name>
<keyword id="KW-1185">Reference proteome</keyword>
<keyword id="KW-0687">Ribonucleoprotein</keyword>
<keyword id="KW-0689">Ribosomal protein</keyword>
<protein>
    <recommendedName>
        <fullName evidence="1">Large ribosomal subunit protein bL36</fullName>
    </recommendedName>
    <alternativeName>
        <fullName evidence="2">50S ribosomal protein L36</fullName>
    </alternativeName>
</protein>
<evidence type="ECO:0000255" key="1">
    <source>
        <dbReference type="HAMAP-Rule" id="MF_00251"/>
    </source>
</evidence>
<evidence type="ECO:0000305" key="2"/>
<accession>A1BJ11</accession>
<dbReference type="EMBL" id="CP000492">
    <property type="protein sequence ID" value="ABL66388.1"/>
    <property type="molecule type" value="Genomic_DNA"/>
</dbReference>
<dbReference type="RefSeq" id="WP_010933819.1">
    <property type="nucleotide sequence ID" value="NC_008639.1"/>
</dbReference>
<dbReference type="SMR" id="A1BJ11"/>
<dbReference type="STRING" id="290317.Cpha266_2400"/>
<dbReference type="KEGG" id="cph:Cpha266_2400"/>
<dbReference type="eggNOG" id="COG0257">
    <property type="taxonomic scope" value="Bacteria"/>
</dbReference>
<dbReference type="HOGENOM" id="CLU_135723_6_2_10"/>
<dbReference type="OrthoDB" id="9801558at2"/>
<dbReference type="Proteomes" id="UP000008701">
    <property type="component" value="Chromosome"/>
</dbReference>
<dbReference type="GO" id="GO:0005737">
    <property type="term" value="C:cytoplasm"/>
    <property type="evidence" value="ECO:0007669"/>
    <property type="project" value="UniProtKB-ARBA"/>
</dbReference>
<dbReference type="GO" id="GO:1990904">
    <property type="term" value="C:ribonucleoprotein complex"/>
    <property type="evidence" value="ECO:0007669"/>
    <property type="project" value="UniProtKB-KW"/>
</dbReference>
<dbReference type="GO" id="GO:0005840">
    <property type="term" value="C:ribosome"/>
    <property type="evidence" value="ECO:0007669"/>
    <property type="project" value="UniProtKB-KW"/>
</dbReference>
<dbReference type="GO" id="GO:0003735">
    <property type="term" value="F:structural constituent of ribosome"/>
    <property type="evidence" value="ECO:0007669"/>
    <property type="project" value="InterPro"/>
</dbReference>
<dbReference type="GO" id="GO:0006412">
    <property type="term" value="P:translation"/>
    <property type="evidence" value="ECO:0007669"/>
    <property type="project" value="UniProtKB-UniRule"/>
</dbReference>
<dbReference type="HAMAP" id="MF_00251">
    <property type="entry name" value="Ribosomal_bL36"/>
    <property type="match status" value="1"/>
</dbReference>
<dbReference type="InterPro" id="IPR000473">
    <property type="entry name" value="Ribosomal_bL36"/>
</dbReference>
<dbReference type="InterPro" id="IPR035977">
    <property type="entry name" value="Ribosomal_bL36_sp"/>
</dbReference>
<dbReference type="NCBIfam" id="TIGR01022">
    <property type="entry name" value="rpmJ_bact"/>
    <property type="match status" value="1"/>
</dbReference>
<dbReference type="PANTHER" id="PTHR42888">
    <property type="entry name" value="50S RIBOSOMAL PROTEIN L36, CHLOROPLASTIC"/>
    <property type="match status" value="1"/>
</dbReference>
<dbReference type="PANTHER" id="PTHR42888:SF1">
    <property type="entry name" value="LARGE RIBOSOMAL SUBUNIT PROTEIN BL36C"/>
    <property type="match status" value="1"/>
</dbReference>
<dbReference type="Pfam" id="PF00444">
    <property type="entry name" value="Ribosomal_L36"/>
    <property type="match status" value="1"/>
</dbReference>
<dbReference type="SUPFAM" id="SSF57840">
    <property type="entry name" value="Ribosomal protein L36"/>
    <property type="match status" value="1"/>
</dbReference>
<dbReference type="PROSITE" id="PS00828">
    <property type="entry name" value="RIBOSOMAL_L36"/>
    <property type="match status" value="1"/>
</dbReference>
<proteinExistence type="inferred from homology"/>
<gene>
    <name evidence="1" type="primary">rpmJ</name>
    <name type="ordered locus">Cpha266_2400</name>
</gene>
<comment type="similarity">
    <text evidence="1">Belongs to the bacterial ribosomal protein bL36 family.</text>
</comment>
<reference key="1">
    <citation type="submission" date="2006-12" db="EMBL/GenBank/DDBJ databases">
        <title>Complete sequence of Chlorobium phaeobacteroides DSM 266.</title>
        <authorList>
            <consortium name="US DOE Joint Genome Institute"/>
            <person name="Copeland A."/>
            <person name="Lucas S."/>
            <person name="Lapidus A."/>
            <person name="Barry K."/>
            <person name="Detter J.C."/>
            <person name="Glavina del Rio T."/>
            <person name="Hammon N."/>
            <person name="Israni S."/>
            <person name="Pitluck S."/>
            <person name="Goltsman E."/>
            <person name="Schmutz J."/>
            <person name="Larimer F."/>
            <person name="Land M."/>
            <person name="Hauser L."/>
            <person name="Mikhailova N."/>
            <person name="Li T."/>
            <person name="Overmann J."/>
            <person name="Bryant D.A."/>
            <person name="Richardson P."/>
        </authorList>
    </citation>
    <scope>NUCLEOTIDE SEQUENCE [LARGE SCALE GENOMIC DNA]</scope>
    <source>
        <strain>DSM 266 / SMG 266 / 2430</strain>
    </source>
</reference>
<feature type="chain" id="PRO_0000302182" description="Large ribosomal subunit protein bL36">
    <location>
        <begin position="1"/>
        <end position="38"/>
    </location>
</feature>